<sequence length="263" mass="29580">MLQDVMKKSKKIVIKIGSNTLSNVDGTINHDFIEALCQQVAFLVGEGKQVVIVTSGARIAGISRTNKWSRKEDMNYKQALCAIGQVELMSAYNSHFSHHGIYIGQLLLTREDFFDKTRNLNIRNTLFTLVDEGIVPIINENDTVSVEQIKIGDNDTLAAYTATLWNADLLILLSDIDGIYNKNPKEYEDAELLEQVQNIDDMLKEIEVGETNSFGTGGIETKIEAARIVNRYNIPMILGNGKNKEILMKLYQNEAKATIFFRE</sequence>
<dbReference type="EC" id="2.7.2.11" evidence="1"/>
<dbReference type="EMBL" id="CP000853">
    <property type="protein sequence ID" value="ABW17695.1"/>
    <property type="molecule type" value="Genomic_DNA"/>
</dbReference>
<dbReference type="RefSeq" id="WP_012158010.1">
    <property type="nucleotide sequence ID" value="NC_009922.1"/>
</dbReference>
<dbReference type="SMR" id="A8MFQ6"/>
<dbReference type="STRING" id="350688.Clos_0128"/>
<dbReference type="KEGG" id="aoe:Clos_0128"/>
<dbReference type="eggNOG" id="COG0263">
    <property type="taxonomic scope" value="Bacteria"/>
</dbReference>
<dbReference type="HOGENOM" id="CLU_025400_0_0_9"/>
<dbReference type="OrthoDB" id="9804434at2"/>
<dbReference type="UniPathway" id="UPA00098">
    <property type="reaction ID" value="UER00359"/>
</dbReference>
<dbReference type="Proteomes" id="UP000000269">
    <property type="component" value="Chromosome"/>
</dbReference>
<dbReference type="GO" id="GO:0005829">
    <property type="term" value="C:cytosol"/>
    <property type="evidence" value="ECO:0007669"/>
    <property type="project" value="TreeGrafter"/>
</dbReference>
<dbReference type="GO" id="GO:0005524">
    <property type="term" value="F:ATP binding"/>
    <property type="evidence" value="ECO:0007669"/>
    <property type="project" value="UniProtKB-KW"/>
</dbReference>
<dbReference type="GO" id="GO:0004349">
    <property type="term" value="F:glutamate 5-kinase activity"/>
    <property type="evidence" value="ECO:0007669"/>
    <property type="project" value="UniProtKB-UniRule"/>
</dbReference>
<dbReference type="GO" id="GO:0055129">
    <property type="term" value="P:L-proline biosynthetic process"/>
    <property type="evidence" value="ECO:0007669"/>
    <property type="project" value="UniProtKB-UniRule"/>
</dbReference>
<dbReference type="CDD" id="cd04242">
    <property type="entry name" value="AAK_G5K_ProB"/>
    <property type="match status" value="1"/>
</dbReference>
<dbReference type="FunFam" id="3.40.1160.10:FF:000018">
    <property type="entry name" value="Glutamate 5-kinase"/>
    <property type="match status" value="1"/>
</dbReference>
<dbReference type="Gene3D" id="3.40.1160.10">
    <property type="entry name" value="Acetylglutamate kinase-like"/>
    <property type="match status" value="1"/>
</dbReference>
<dbReference type="HAMAP" id="MF_00456">
    <property type="entry name" value="ProB"/>
    <property type="match status" value="1"/>
</dbReference>
<dbReference type="InterPro" id="IPR036393">
    <property type="entry name" value="AceGlu_kinase-like_sf"/>
</dbReference>
<dbReference type="InterPro" id="IPR001048">
    <property type="entry name" value="Asp/Glu/Uridylate_kinase"/>
</dbReference>
<dbReference type="InterPro" id="IPR041739">
    <property type="entry name" value="G5K_ProB"/>
</dbReference>
<dbReference type="InterPro" id="IPR001057">
    <property type="entry name" value="Glu/AcGlu_kinase"/>
</dbReference>
<dbReference type="InterPro" id="IPR011529">
    <property type="entry name" value="Glu_5kinase"/>
</dbReference>
<dbReference type="InterPro" id="IPR005715">
    <property type="entry name" value="Glu_5kinase/COase_Synthase"/>
</dbReference>
<dbReference type="InterPro" id="IPR019797">
    <property type="entry name" value="Glutamate_5-kinase_CS"/>
</dbReference>
<dbReference type="NCBIfam" id="TIGR01027">
    <property type="entry name" value="proB"/>
    <property type="match status" value="1"/>
</dbReference>
<dbReference type="PANTHER" id="PTHR43654">
    <property type="entry name" value="GLUTAMATE 5-KINASE"/>
    <property type="match status" value="1"/>
</dbReference>
<dbReference type="PANTHER" id="PTHR43654:SF1">
    <property type="entry name" value="ISOPENTENYL PHOSPHATE KINASE"/>
    <property type="match status" value="1"/>
</dbReference>
<dbReference type="Pfam" id="PF00696">
    <property type="entry name" value="AA_kinase"/>
    <property type="match status" value="1"/>
</dbReference>
<dbReference type="PIRSF" id="PIRSF000729">
    <property type="entry name" value="GK"/>
    <property type="match status" value="1"/>
</dbReference>
<dbReference type="PRINTS" id="PR00474">
    <property type="entry name" value="GLU5KINASE"/>
</dbReference>
<dbReference type="SUPFAM" id="SSF53633">
    <property type="entry name" value="Carbamate kinase-like"/>
    <property type="match status" value="1"/>
</dbReference>
<dbReference type="PROSITE" id="PS00902">
    <property type="entry name" value="GLUTAMATE_5_KINASE"/>
    <property type="match status" value="1"/>
</dbReference>
<name>PROB_ALKOO</name>
<evidence type="ECO:0000255" key="1">
    <source>
        <dbReference type="HAMAP-Rule" id="MF_00456"/>
    </source>
</evidence>
<protein>
    <recommendedName>
        <fullName evidence="1">Glutamate 5-kinase</fullName>
        <ecNumber evidence="1">2.7.2.11</ecNumber>
    </recommendedName>
    <alternativeName>
        <fullName evidence="1">Gamma-glutamyl kinase</fullName>
        <shortName evidence="1">GK</shortName>
    </alternativeName>
</protein>
<proteinExistence type="inferred from homology"/>
<feature type="chain" id="PRO_1000193685" description="Glutamate 5-kinase">
    <location>
        <begin position="1"/>
        <end position="263"/>
    </location>
</feature>
<feature type="binding site" evidence="1">
    <location>
        <position position="15"/>
    </location>
    <ligand>
        <name>ATP</name>
        <dbReference type="ChEBI" id="CHEBI:30616"/>
    </ligand>
</feature>
<feature type="binding site" evidence="1">
    <location>
        <position position="55"/>
    </location>
    <ligand>
        <name>substrate</name>
    </ligand>
</feature>
<feature type="binding site" evidence="1">
    <location>
        <position position="142"/>
    </location>
    <ligand>
        <name>substrate</name>
    </ligand>
</feature>
<feature type="binding site" evidence="1">
    <location>
        <position position="154"/>
    </location>
    <ligand>
        <name>substrate</name>
    </ligand>
</feature>
<feature type="binding site" evidence="1">
    <location>
        <begin position="174"/>
        <end position="175"/>
    </location>
    <ligand>
        <name>ATP</name>
        <dbReference type="ChEBI" id="CHEBI:30616"/>
    </ligand>
</feature>
<feature type="binding site" evidence="1">
    <location>
        <begin position="216"/>
        <end position="222"/>
    </location>
    <ligand>
        <name>ATP</name>
        <dbReference type="ChEBI" id="CHEBI:30616"/>
    </ligand>
</feature>
<comment type="function">
    <text evidence="1">Catalyzes the transfer of a phosphate group to glutamate to form L-glutamate 5-phosphate.</text>
</comment>
<comment type="catalytic activity">
    <reaction evidence="1">
        <text>L-glutamate + ATP = L-glutamyl 5-phosphate + ADP</text>
        <dbReference type="Rhea" id="RHEA:14877"/>
        <dbReference type="ChEBI" id="CHEBI:29985"/>
        <dbReference type="ChEBI" id="CHEBI:30616"/>
        <dbReference type="ChEBI" id="CHEBI:58274"/>
        <dbReference type="ChEBI" id="CHEBI:456216"/>
        <dbReference type="EC" id="2.7.2.11"/>
    </reaction>
</comment>
<comment type="pathway">
    <text evidence="1">Amino-acid biosynthesis; L-proline biosynthesis; L-glutamate 5-semialdehyde from L-glutamate: step 1/2.</text>
</comment>
<comment type="subcellular location">
    <subcellularLocation>
        <location evidence="1">Cytoplasm</location>
    </subcellularLocation>
</comment>
<comment type="similarity">
    <text evidence="1">Belongs to the glutamate 5-kinase family.</text>
</comment>
<gene>
    <name evidence="1" type="primary">proB</name>
    <name type="ordered locus">Clos_0128</name>
</gene>
<organism>
    <name type="scientific">Alkaliphilus oremlandii (strain OhILAs)</name>
    <name type="common">Clostridium oremlandii (strain OhILAs)</name>
    <dbReference type="NCBI Taxonomy" id="350688"/>
    <lineage>
        <taxon>Bacteria</taxon>
        <taxon>Bacillati</taxon>
        <taxon>Bacillota</taxon>
        <taxon>Clostridia</taxon>
        <taxon>Peptostreptococcales</taxon>
        <taxon>Natronincolaceae</taxon>
        <taxon>Alkaliphilus</taxon>
    </lineage>
</organism>
<accession>A8MFQ6</accession>
<reference key="1">
    <citation type="submission" date="2007-10" db="EMBL/GenBank/DDBJ databases">
        <title>Complete genome of Alkaliphilus oremlandii OhILAs.</title>
        <authorList>
            <person name="Copeland A."/>
            <person name="Lucas S."/>
            <person name="Lapidus A."/>
            <person name="Barry K."/>
            <person name="Detter J.C."/>
            <person name="Glavina del Rio T."/>
            <person name="Hammon N."/>
            <person name="Israni S."/>
            <person name="Dalin E."/>
            <person name="Tice H."/>
            <person name="Pitluck S."/>
            <person name="Chain P."/>
            <person name="Malfatti S."/>
            <person name="Shin M."/>
            <person name="Vergez L."/>
            <person name="Schmutz J."/>
            <person name="Larimer F."/>
            <person name="Land M."/>
            <person name="Hauser L."/>
            <person name="Kyrpides N."/>
            <person name="Mikhailova N."/>
            <person name="Stolz J.F."/>
            <person name="Dawson A."/>
            <person name="Fisher E."/>
            <person name="Crable B."/>
            <person name="Perera E."/>
            <person name="Lisak J."/>
            <person name="Ranganathan M."/>
            <person name="Basu P."/>
            <person name="Richardson P."/>
        </authorList>
    </citation>
    <scope>NUCLEOTIDE SEQUENCE [LARGE SCALE GENOMIC DNA]</scope>
    <source>
        <strain>OhILAs</strain>
    </source>
</reference>
<keyword id="KW-0028">Amino-acid biosynthesis</keyword>
<keyword id="KW-0067">ATP-binding</keyword>
<keyword id="KW-0963">Cytoplasm</keyword>
<keyword id="KW-0418">Kinase</keyword>
<keyword id="KW-0547">Nucleotide-binding</keyword>
<keyword id="KW-0641">Proline biosynthesis</keyword>
<keyword id="KW-1185">Reference proteome</keyword>
<keyword id="KW-0808">Transferase</keyword>